<organism>
    <name type="scientific">Desulfitobacterium hafniense (strain Y51)</name>
    <dbReference type="NCBI Taxonomy" id="138119"/>
    <lineage>
        <taxon>Bacteria</taxon>
        <taxon>Bacillati</taxon>
        <taxon>Bacillota</taxon>
        <taxon>Clostridia</taxon>
        <taxon>Eubacteriales</taxon>
        <taxon>Desulfitobacteriaceae</taxon>
        <taxon>Desulfitobacterium</taxon>
    </lineage>
</organism>
<protein>
    <recommendedName>
        <fullName evidence="1">7-cyano-7-deazaguanine synthase 2</fullName>
        <ecNumber evidence="1">6.3.4.20</ecNumber>
    </recommendedName>
    <alternativeName>
        <fullName evidence="1">7-cyano-7-carbaguanine synthase 2</fullName>
    </alternativeName>
    <alternativeName>
        <fullName evidence="1">PreQ(0) synthase 2</fullName>
    </alternativeName>
    <alternativeName>
        <fullName evidence="1">Queuosine biosynthesis protein QueC 2</fullName>
    </alternativeName>
</protein>
<sequence>MKKAVVLLSGGLDSTTCMSVAHKAGYELYPLSFDYGQRHQRELEAAKAVAQYYKVKEHRLIKIEHVGGSALTDASIQVPDYTEDGQIPVTYVPARNILFLSYALGYGEVMGAEAIFIGISSVDYSGYPDCRPEFLQAFQKVVDVGTKAGVSGQTIAIKAPLLYLSKAETIQLAAENGAPLHHTTSCYRGGEKACGTCDSCTLRLKGFAEAGIKDPIDYVNQGDRSCFSTPLED</sequence>
<evidence type="ECO:0000255" key="1">
    <source>
        <dbReference type="HAMAP-Rule" id="MF_01633"/>
    </source>
</evidence>
<evidence type="ECO:0000305" key="2"/>
<comment type="function">
    <text evidence="1">Catalyzes the ATP-dependent conversion of 7-carboxy-7-deazaguanine (CDG) to 7-cyano-7-deazaguanine (preQ(0)).</text>
</comment>
<comment type="catalytic activity">
    <reaction evidence="1">
        <text>7-carboxy-7-deazaguanine + NH4(+) + ATP = 7-cyano-7-deazaguanine + ADP + phosphate + H2O + H(+)</text>
        <dbReference type="Rhea" id="RHEA:27982"/>
        <dbReference type="ChEBI" id="CHEBI:15377"/>
        <dbReference type="ChEBI" id="CHEBI:15378"/>
        <dbReference type="ChEBI" id="CHEBI:28938"/>
        <dbReference type="ChEBI" id="CHEBI:30616"/>
        <dbReference type="ChEBI" id="CHEBI:43474"/>
        <dbReference type="ChEBI" id="CHEBI:45075"/>
        <dbReference type="ChEBI" id="CHEBI:61036"/>
        <dbReference type="ChEBI" id="CHEBI:456216"/>
        <dbReference type="EC" id="6.3.4.20"/>
    </reaction>
</comment>
<comment type="cofactor">
    <cofactor evidence="1">
        <name>Zn(2+)</name>
        <dbReference type="ChEBI" id="CHEBI:29105"/>
    </cofactor>
    <text evidence="1">Binds 1 zinc ion per subunit.</text>
</comment>
<comment type="pathway">
    <text evidence="1">Purine metabolism; 7-cyano-7-deazaguanine biosynthesis.</text>
</comment>
<comment type="subunit">
    <text evidence="1">Homodimer.</text>
</comment>
<comment type="similarity">
    <text evidence="1">Belongs to the QueC family.</text>
</comment>
<comment type="sequence caution" evidence="2">
    <conflict type="erroneous initiation">
        <sequence resource="EMBL-CDS" id="BAE83844"/>
    </conflict>
</comment>
<proteinExistence type="inferred from homology"/>
<feature type="chain" id="PRO_0000246836" description="7-cyano-7-deazaguanine synthase 2">
    <location>
        <begin position="1"/>
        <end position="233"/>
    </location>
</feature>
<feature type="binding site" evidence="1">
    <location>
        <begin position="8"/>
        <end position="18"/>
    </location>
    <ligand>
        <name>ATP</name>
        <dbReference type="ChEBI" id="CHEBI:30616"/>
    </ligand>
</feature>
<feature type="binding site" evidence="1">
    <location>
        <position position="186"/>
    </location>
    <ligand>
        <name>Zn(2+)</name>
        <dbReference type="ChEBI" id="CHEBI:29105"/>
    </ligand>
</feature>
<feature type="binding site" evidence="1">
    <location>
        <position position="194"/>
    </location>
    <ligand>
        <name>Zn(2+)</name>
        <dbReference type="ChEBI" id="CHEBI:29105"/>
    </ligand>
</feature>
<feature type="binding site" evidence="1">
    <location>
        <position position="197"/>
    </location>
    <ligand>
        <name>Zn(2+)</name>
        <dbReference type="ChEBI" id="CHEBI:29105"/>
    </ligand>
</feature>
<feature type="binding site" evidence="1">
    <location>
        <position position="200"/>
    </location>
    <ligand>
        <name>Zn(2+)</name>
        <dbReference type="ChEBI" id="CHEBI:29105"/>
    </ligand>
</feature>
<accession>Q24VU8</accession>
<dbReference type="EC" id="6.3.4.20" evidence="1"/>
<dbReference type="EMBL" id="AP008230">
    <property type="protein sequence ID" value="BAE83844.1"/>
    <property type="status" value="ALT_INIT"/>
    <property type="molecule type" value="Genomic_DNA"/>
</dbReference>
<dbReference type="RefSeq" id="WP_041272362.1">
    <property type="nucleotide sequence ID" value="NC_007907.1"/>
</dbReference>
<dbReference type="SMR" id="Q24VU8"/>
<dbReference type="STRING" id="138119.DSY2055"/>
<dbReference type="KEGG" id="dsy:DSY2055"/>
<dbReference type="eggNOG" id="COG0603">
    <property type="taxonomic scope" value="Bacteria"/>
</dbReference>
<dbReference type="HOGENOM" id="CLU_081854_1_0_9"/>
<dbReference type="UniPathway" id="UPA00391"/>
<dbReference type="Proteomes" id="UP000001946">
    <property type="component" value="Chromosome"/>
</dbReference>
<dbReference type="GO" id="GO:0005524">
    <property type="term" value="F:ATP binding"/>
    <property type="evidence" value="ECO:0007669"/>
    <property type="project" value="UniProtKB-UniRule"/>
</dbReference>
<dbReference type="GO" id="GO:0016879">
    <property type="term" value="F:ligase activity, forming carbon-nitrogen bonds"/>
    <property type="evidence" value="ECO:0007669"/>
    <property type="project" value="UniProtKB-UniRule"/>
</dbReference>
<dbReference type="GO" id="GO:0008270">
    <property type="term" value="F:zinc ion binding"/>
    <property type="evidence" value="ECO:0007669"/>
    <property type="project" value="UniProtKB-UniRule"/>
</dbReference>
<dbReference type="GO" id="GO:0008616">
    <property type="term" value="P:queuosine biosynthetic process"/>
    <property type="evidence" value="ECO:0007669"/>
    <property type="project" value="UniProtKB-UniRule"/>
</dbReference>
<dbReference type="CDD" id="cd01995">
    <property type="entry name" value="QueC-like"/>
    <property type="match status" value="1"/>
</dbReference>
<dbReference type="Gene3D" id="3.40.50.620">
    <property type="entry name" value="HUPs"/>
    <property type="match status" value="1"/>
</dbReference>
<dbReference type="HAMAP" id="MF_01633">
    <property type="entry name" value="QueC"/>
    <property type="match status" value="1"/>
</dbReference>
<dbReference type="InterPro" id="IPR018317">
    <property type="entry name" value="QueC"/>
</dbReference>
<dbReference type="InterPro" id="IPR014729">
    <property type="entry name" value="Rossmann-like_a/b/a_fold"/>
</dbReference>
<dbReference type="NCBIfam" id="TIGR00364">
    <property type="entry name" value="7-cyano-7-deazaguanine synthase QueC"/>
    <property type="match status" value="1"/>
</dbReference>
<dbReference type="PANTHER" id="PTHR42914">
    <property type="entry name" value="7-CYANO-7-DEAZAGUANINE SYNTHASE"/>
    <property type="match status" value="1"/>
</dbReference>
<dbReference type="PANTHER" id="PTHR42914:SF1">
    <property type="entry name" value="7-CYANO-7-DEAZAGUANINE SYNTHASE"/>
    <property type="match status" value="1"/>
</dbReference>
<dbReference type="Pfam" id="PF06508">
    <property type="entry name" value="QueC"/>
    <property type="match status" value="1"/>
</dbReference>
<dbReference type="PIRSF" id="PIRSF006293">
    <property type="entry name" value="ExsB"/>
    <property type="match status" value="1"/>
</dbReference>
<dbReference type="SUPFAM" id="SSF52402">
    <property type="entry name" value="Adenine nucleotide alpha hydrolases-like"/>
    <property type="match status" value="1"/>
</dbReference>
<name>QUEC2_DESHY</name>
<keyword id="KW-0067">ATP-binding</keyword>
<keyword id="KW-0436">Ligase</keyword>
<keyword id="KW-0479">Metal-binding</keyword>
<keyword id="KW-0547">Nucleotide-binding</keyword>
<keyword id="KW-0671">Queuosine biosynthesis</keyword>
<keyword id="KW-1185">Reference proteome</keyword>
<keyword id="KW-0862">Zinc</keyword>
<gene>
    <name evidence="1" type="primary">queC2</name>
    <name type="ordered locus">DSY2055</name>
</gene>
<reference key="1">
    <citation type="journal article" date="2006" name="J. Bacteriol.">
        <title>Complete genome sequence of the dehalorespiring bacterium Desulfitobacterium hafniense Y51 and comparison with Dehalococcoides ethenogenes 195.</title>
        <authorList>
            <person name="Nonaka H."/>
            <person name="Keresztes G."/>
            <person name="Shinoda Y."/>
            <person name="Ikenaga Y."/>
            <person name="Abe M."/>
            <person name="Naito K."/>
            <person name="Inatomi K."/>
            <person name="Furukawa K."/>
            <person name="Inui M."/>
            <person name="Yukawa H."/>
        </authorList>
    </citation>
    <scope>NUCLEOTIDE SEQUENCE [LARGE SCALE GENOMIC DNA]</scope>
    <source>
        <strain>Y51</strain>
    </source>
</reference>